<sequence length="469" mass="52801">MSTSHAAHPDRLLPADPATRDIARRLLTYVEDLPIISPHGHLEASMFVKDEPFADPTTLLISPDHYLTRVLHSAGVDLADLRVGGTEGKTPREAWRIFASNWDLYTGTATGYWVEQEFEHVFGINPDRLSAENADDIYDELSEILARPDFRPRALAEQFNLEILATTDDPLDDLADHKALAQDPTFSPRVLPTFRPDAYTKMYNPGWAEKTTRLIDVAGDGKAGWEGYLQAMRNRRQYFIDHGATSADHGTHDTDTTPLSHEDAQRILDKGLAGTATLAEMRAFEANTTYRFAEMCQDDGLVMTLHPGVYRNHSASAQKKFGNDIGADIPFQLEYTRGLRPLLSDFGENKDFHFVMFTIDETVFSREVAPLAGYYPAAYVGAPWWFIDEIDAMNRFRSLTTGTTGFSRYSGFIDDTRAYCSIPARHNTSRRVEANYLARLVAEHRISETRASEIIVDLIDASPRRVFKL</sequence>
<proteinExistence type="inferred from homology"/>
<organism>
    <name type="scientific">Corynebacterium efficiens (strain DSM 44549 / YS-314 / AJ 12310 / JCM 11189 / NBRC 100395)</name>
    <dbReference type="NCBI Taxonomy" id="196164"/>
    <lineage>
        <taxon>Bacteria</taxon>
        <taxon>Bacillati</taxon>
        <taxon>Actinomycetota</taxon>
        <taxon>Actinomycetes</taxon>
        <taxon>Mycobacteriales</taxon>
        <taxon>Corynebacteriaceae</taxon>
        <taxon>Corynebacterium</taxon>
    </lineage>
</organism>
<protein>
    <recommendedName>
        <fullName evidence="1">Uronate isomerase</fullName>
        <ecNumber evidence="1">5.3.1.12</ecNumber>
    </recommendedName>
    <alternativeName>
        <fullName evidence="1">Glucuronate isomerase</fullName>
    </alternativeName>
    <alternativeName>
        <fullName evidence="1">Uronic isomerase</fullName>
    </alternativeName>
</protein>
<comment type="catalytic activity">
    <reaction evidence="1">
        <text>D-glucuronate = D-fructuronate</text>
        <dbReference type="Rhea" id="RHEA:13049"/>
        <dbReference type="ChEBI" id="CHEBI:58720"/>
        <dbReference type="ChEBI" id="CHEBI:59863"/>
        <dbReference type="EC" id="5.3.1.12"/>
    </reaction>
</comment>
<comment type="catalytic activity">
    <reaction evidence="1">
        <text>aldehydo-D-galacturonate = keto-D-tagaturonate</text>
        <dbReference type="Rhea" id="RHEA:27702"/>
        <dbReference type="ChEBI" id="CHEBI:12952"/>
        <dbReference type="ChEBI" id="CHEBI:17886"/>
        <dbReference type="EC" id="5.3.1.12"/>
    </reaction>
</comment>
<comment type="pathway">
    <text evidence="1">Carbohydrate metabolism; pentose and glucuronate interconversion.</text>
</comment>
<comment type="similarity">
    <text evidence="1">Belongs to the metallo-dependent hydrolases superfamily. Uronate isomerase family.</text>
</comment>
<comment type="sequence caution" evidence="2">
    <conflict type="erroneous initiation">
        <sequence resource="EMBL-CDS" id="BAC19187"/>
    </conflict>
</comment>
<accession>Q8FMX2</accession>
<reference key="1">
    <citation type="journal article" date="2003" name="Genome Res.">
        <title>Comparative complete genome sequence analysis of the amino acid replacements responsible for the thermostability of Corynebacterium efficiens.</title>
        <authorList>
            <person name="Nishio Y."/>
            <person name="Nakamura Y."/>
            <person name="Kawarabayasi Y."/>
            <person name="Usuda Y."/>
            <person name="Kimura E."/>
            <person name="Sugimoto S."/>
            <person name="Matsui K."/>
            <person name="Yamagishi A."/>
            <person name="Kikuchi H."/>
            <person name="Ikeo K."/>
            <person name="Gojobori T."/>
        </authorList>
    </citation>
    <scope>NUCLEOTIDE SEQUENCE [LARGE SCALE GENOMIC DNA]</scope>
    <source>
        <strain>DSM 44549 / YS-314 / AJ 12310 / JCM 11189 / NBRC 100395</strain>
    </source>
</reference>
<name>UXAC_COREF</name>
<feature type="chain" id="PRO_0000172769" description="Uronate isomerase">
    <location>
        <begin position="1"/>
        <end position="469"/>
    </location>
</feature>
<dbReference type="EC" id="5.3.1.12" evidence="1"/>
<dbReference type="EMBL" id="BA000035">
    <property type="protein sequence ID" value="BAC19187.1"/>
    <property type="status" value="ALT_INIT"/>
    <property type="molecule type" value="Genomic_DNA"/>
</dbReference>
<dbReference type="RefSeq" id="WP_006768383.1">
    <property type="nucleotide sequence ID" value="NC_004369.1"/>
</dbReference>
<dbReference type="SMR" id="Q8FMX2"/>
<dbReference type="STRING" id="196164.gene:10742814"/>
<dbReference type="KEGG" id="cef:CE2377"/>
<dbReference type="eggNOG" id="COG1904">
    <property type="taxonomic scope" value="Bacteria"/>
</dbReference>
<dbReference type="HOGENOM" id="CLU_044465_0_0_11"/>
<dbReference type="OrthoDB" id="9766564at2"/>
<dbReference type="UniPathway" id="UPA00246"/>
<dbReference type="Proteomes" id="UP000001409">
    <property type="component" value="Chromosome"/>
</dbReference>
<dbReference type="GO" id="GO:0008880">
    <property type="term" value="F:glucuronate isomerase activity"/>
    <property type="evidence" value="ECO:0007669"/>
    <property type="project" value="UniProtKB-UniRule"/>
</dbReference>
<dbReference type="GO" id="GO:0019698">
    <property type="term" value="P:D-galacturonate catabolic process"/>
    <property type="evidence" value="ECO:0007669"/>
    <property type="project" value="TreeGrafter"/>
</dbReference>
<dbReference type="GO" id="GO:0042840">
    <property type="term" value="P:D-glucuronate catabolic process"/>
    <property type="evidence" value="ECO:0007669"/>
    <property type="project" value="TreeGrafter"/>
</dbReference>
<dbReference type="Gene3D" id="3.20.20.140">
    <property type="entry name" value="Metal-dependent hydrolases"/>
    <property type="match status" value="1"/>
</dbReference>
<dbReference type="Gene3D" id="1.10.2020.10">
    <property type="entry name" value="uronate isomerase, domain 2, chain A"/>
    <property type="match status" value="1"/>
</dbReference>
<dbReference type="HAMAP" id="MF_00675">
    <property type="entry name" value="UxaC"/>
    <property type="match status" value="1"/>
</dbReference>
<dbReference type="InterPro" id="IPR032466">
    <property type="entry name" value="Metal_Hydrolase"/>
</dbReference>
<dbReference type="InterPro" id="IPR003766">
    <property type="entry name" value="Uronate_isomerase"/>
</dbReference>
<dbReference type="NCBIfam" id="NF002794">
    <property type="entry name" value="PRK02925.1"/>
    <property type="match status" value="1"/>
</dbReference>
<dbReference type="PANTHER" id="PTHR30068">
    <property type="entry name" value="URONATE ISOMERASE"/>
    <property type="match status" value="1"/>
</dbReference>
<dbReference type="PANTHER" id="PTHR30068:SF4">
    <property type="entry name" value="URONATE ISOMERASE"/>
    <property type="match status" value="1"/>
</dbReference>
<dbReference type="Pfam" id="PF02614">
    <property type="entry name" value="UxaC"/>
    <property type="match status" value="1"/>
</dbReference>
<dbReference type="SUPFAM" id="SSF51556">
    <property type="entry name" value="Metallo-dependent hydrolases"/>
    <property type="match status" value="1"/>
</dbReference>
<evidence type="ECO:0000255" key="1">
    <source>
        <dbReference type="HAMAP-Rule" id="MF_00675"/>
    </source>
</evidence>
<evidence type="ECO:0000305" key="2"/>
<keyword id="KW-0413">Isomerase</keyword>
<keyword id="KW-1185">Reference proteome</keyword>
<gene>
    <name evidence="1" type="primary">uxaC</name>
    <name type="ordered locus">CE2377</name>
</gene>